<reference key="1">
    <citation type="journal article" date="2000" name="J. Biol. Chem.">
        <title>The nuclear factor SPBP contains different functional domains and stimulates the activity of various transcriptional activators.</title>
        <authorList>
            <person name="Rekdal C."/>
            <person name="Sjoettem E."/>
            <person name="Johansen T."/>
        </authorList>
    </citation>
    <scope>NUCLEOTIDE SEQUENCE [MRNA] (ISOFORMS 1 AND 2)</scope>
    <scope>CHARACTERIZATION</scope>
    <scope>ALTERNATIVE SPLICING</scope>
    <source>
        <strain>BALB/cJ</strain>
        <tissue>Brain</tissue>
    </source>
</reference>
<reference key="2">
    <citation type="journal article" date="2009" name="PLoS Biol.">
        <title>Lineage-specific biology revealed by a finished genome assembly of the mouse.</title>
        <authorList>
            <person name="Church D.M."/>
            <person name="Goodstadt L."/>
            <person name="Hillier L.W."/>
            <person name="Zody M.C."/>
            <person name="Goldstein S."/>
            <person name="She X."/>
            <person name="Bult C.J."/>
            <person name="Agarwala R."/>
            <person name="Cherry J.L."/>
            <person name="DiCuccio M."/>
            <person name="Hlavina W."/>
            <person name="Kapustin Y."/>
            <person name="Meric P."/>
            <person name="Maglott D."/>
            <person name="Birtle Z."/>
            <person name="Marques A.C."/>
            <person name="Graves T."/>
            <person name="Zhou S."/>
            <person name="Teague B."/>
            <person name="Potamousis K."/>
            <person name="Churas C."/>
            <person name="Place M."/>
            <person name="Herschleb J."/>
            <person name="Runnheim R."/>
            <person name="Forrest D."/>
            <person name="Amos-Landgraf J."/>
            <person name="Schwartz D.C."/>
            <person name="Cheng Z."/>
            <person name="Lindblad-Toh K."/>
            <person name="Eichler E.E."/>
            <person name="Ponting C.P."/>
        </authorList>
    </citation>
    <scope>NUCLEOTIDE SEQUENCE [LARGE SCALE GENOMIC DNA]</scope>
    <source>
        <strain>C57BL/6J</strain>
    </source>
</reference>
<reference key="3">
    <citation type="journal article" date="2004" name="Genome Res.">
        <title>The status, quality, and expansion of the NIH full-length cDNA project: the Mammalian Gene Collection (MGC).</title>
        <authorList>
            <consortium name="The MGC Project Team"/>
        </authorList>
    </citation>
    <scope>NUCLEOTIDE SEQUENCE [LARGE SCALE MRNA] (ISOFORM 1)</scope>
    <source>
        <tissue>Brain</tissue>
    </source>
</reference>
<reference key="4">
    <citation type="journal article" date="1995" name="Mol. Cell. Biol.">
        <title>Molecular characterization of a novel transcription factor that controls stromelysin expression.</title>
        <authorList>
            <person name="Sanz L."/>
            <person name="Moscat J."/>
            <person name="Diaz-Meco M.T."/>
        </authorList>
    </citation>
    <scope>NUCLEOTIDE SEQUENCE [MRNA] OF 774-1965 (ISOFORM 2)</scope>
    <scope>FUNCTION</scope>
    <source>
        <tissue>Fibroblast</tissue>
    </source>
</reference>
<reference key="5">
    <citation type="journal article" date="1996" name="J. Biol. Chem.">
        <title>Cross-talk between different enhancer elements during mitogenic induction of the human stromelysin-1 gene.</title>
        <authorList>
            <person name="Kirstein M."/>
            <person name="Sanz L."/>
            <person name="Moscat J."/>
            <person name="Diaz-Meco M.T."/>
            <person name="Saus J."/>
        </authorList>
    </citation>
    <scope>INTERACTION WITH JUN</scope>
</reference>
<reference key="6">
    <citation type="journal article" date="2000" name="J. Biol. Chem.">
        <title>Interaction between the transcription factor SPBP and the positive cofactor RNF4. An interplay between protein binding zinc fingers.</title>
        <authorList>
            <person name="Lyngsoe C."/>
            <person name="Bouteiller G."/>
            <person name="Damgaard C.K."/>
            <person name="Ryom D."/>
            <person name="Sanchez-Munoz S."/>
            <person name="Noerby P.L."/>
            <person name="Bonven B.J."/>
            <person name="Joergensen P."/>
        </authorList>
    </citation>
    <scope>INTERACTION WITH RNF4</scope>
    <scope>TISSUE SPECIFICITY</scope>
    <scope>MUTAGENESIS</scope>
</reference>
<reference key="7">
    <citation type="journal article" date="2007" name="Proc. Natl. Acad. Sci. U.S.A.">
        <title>Large-scale phosphorylation analysis of mouse liver.</title>
        <authorList>
            <person name="Villen J."/>
            <person name="Beausoleil S.A."/>
            <person name="Gerber S.A."/>
            <person name="Gygi S.P."/>
        </authorList>
    </citation>
    <scope>PHOSPHORYLATION [LARGE SCALE ANALYSIS] AT SER-612</scope>
    <scope>IDENTIFICATION BY MASS SPECTROMETRY [LARGE SCALE ANALYSIS]</scope>
    <source>
        <tissue>Liver</tissue>
    </source>
</reference>
<reference key="8">
    <citation type="journal article" date="2009" name="Immunity">
        <title>The phagosomal proteome in interferon-gamma-activated macrophages.</title>
        <authorList>
            <person name="Trost M."/>
            <person name="English L."/>
            <person name="Lemieux S."/>
            <person name="Courcelles M."/>
            <person name="Desjardins M."/>
            <person name="Thibault P."/>
        </authorList>
    </citation>
    <scope>IDENTIFICATION BY MASS SPECTROMETRY [LARGE SCALE ANALYSIS]</scope>
</reference>
<reference key="9">
    <citation type="journal article" date="2010" name="Cell">
        <title>A tissue-specific atlas of mouse protein phosphorylation and expression.</title>
        <authorList>
            <person name="Huttlin E.L."/>
            <person name="Jedrychowski M.P."/>
            <person name="Elias J.E."/>
            <person name="Goswami T."/>
            <person name="Rad R."/>
            <person name="Beausoleil S.A."/>
            <person name="Villen J."/>
            <person name="Haas W."/>
            <person name="Sowa M.E."/>
            <person name="Gygi S.P."/>
        </authorList>
    </citation>
    <scope>PHOSPHORYLATION [LARGE SCALE ANALYSIS] AT SER-612; THR-1790 AND THR-1792</scope>
    <scope>IDENTIFICATION BY MASS SPECTROMETRY [LARGE SCALE ANALYSIS]</scope>
    <source>
        <tissue>Brain</tissue>
        <tissue>Kidney</tissue>
        <tissue>Liver</tissue>
        <tissue>Lung</tissue>
        <tissue>Pancreas</tissue>
        <tissue>Testis</tissue>
    </source>
</reference>
<reference key="10">
    <citation type="journal article" date="2013" name="Mol. Cell">
        <title>SIRT5-mediated lysine desuccinylation impacts diverse metabolic pathways.</title>
        <authorList>
            <person name="Park J."/>
            <person name="Chen Y."/>
            <person name="Tishkoff D.X."/>
            <person name="Peng C."/>
            <person name="Tan M."/>
            <person name="Dai L."/>
            <person name="Xie Z."/>
            <person name="Zhang Y."/>
            <person name="Zwaans B.M."/>
            <person name="Skinner M.E."/>
            <person name="Lombard D.B."/>
            <person name="Zhao Y."/>
        </authorList>
    </citation>
    <scope>ACETYLATION [LARGE SCALE ANALYSIS] AT LYS-631</scope>
    <scope>IDENTIFICATION BY MASS SPECTROMETRY [LARGE SCALE ANALYSIS]</scope>
    <source>
        <tissue>Embryonic fibroblast</tissue>
    </source>
</reference>
<keyword id="KW-0007">Acetylation</keyword>
<keyword id="KW-0010">Activator</keyword>
<keyword id="KW-0025">Alternative splicing</keyword>
<keyword id="KW-0238">DNA-binding</keyword>
<keyword id="KW-1017">Isopeptide bond</keyword>
<keyword id="KW-0479">Metal-binding</keyword>
<keyword id="KW-0488">Methylation</keyword>
<keyword id="KW-0539">Nucleus</keyword>
<keyword id="KW-0597">Phosphoprotein</keyword>
<keyword id="KW-1185">Reference proteome</keyword>
<keyword id="KW-0804">Transcription</keyword>
<keyword id="KW-0805">Transcription regulation</keyword>
<keyword id="KW-0832">Ubl conjugation</keyword>
<keyword id="KW-0862">Zinc</keyword>
<keyword id="KW-0863">Zinc-finger</keyword>
<feature type="chain" id="PRO_0000072449" description="Transcription factor 20">
    <location>
        <begin position="1"/>
        <end position="1987"/>
    </location>
</feature>
<feature type="DNA-binding region" description="A.T hook">
    <location>
        <begin position="1565"/>
        <end position="1579"/>
    </location>
</feature>
<feature type="zinc finger region" description="C2HC pre-PHD-type; degenerate" evidence="2">
    <location>
        <begin position="1856"/>
        <end position="1892"/>
    </location>
</feature>
<feature type="zinc finger region" description="PHD-type" evidence="2">
    <location>
        <begin position="1912"/>
        <end position="1960"/>
    </location>
</feature>
<feature type="region of interest" description="Disordered" evidence="3">
    <location>
        <begin position="1"/>
        <end position="79"/>
    </location>
</feature>
<feature type="region of interest" description="Disordered" evidence="3">
    <location>
        <begin position="96"/>
        <end position="432"/>
    </location>
</feature>
<feature type="region of interest" description="Disordered" evidence="3">
    <location>
        <begin position="446"/>
        <end position="481"/>
    </location>
</feature>
<feature type="region of interest" description="Disordered" evidence="3">
    <location>
        <begin position="502"/>
        <end position="816"/>
    </location>
</feature>
<feature type="region of interest" description="Disordered" evidence="3">
    <location>
        <begin position="844"/>
        <end position="891"/>
    </location>
</feature>
<feature type="region of interest" description="Disordered" evidence="3">
    <location>
        <begin position="949"/>
        <end position="1065"/>
    </location>
</feature>
<feature type="region of interest" description="Disordered" evidence="3">
    <location>
        <begin position="1136"/>
        <end position="1372"/>
    </location>
</feature>
<feature type="region of interest" description="Leucine-zipper">
    <location>
        <begin position="1198"/>
        <end position="1219"/>
    </location>
</feature>
<feature type="region of interest" description="Disordered" evidence="3">
    <location>
        <begin position="1415"/>
        <end position="1434"/>
    </location>
</feature>
<feature type="region of interest" description="Disordered" evidence="3">
    <location>
        <begin position="1446"/>
        <end position="1636"/>
    </location>
</feature>
<feature type="region of interest" description="Disordered" evidence="3">
    <location>
        <begin position="1685"/>
        <end position="1710"/>
    </location>
</feature>
<feature type="region of interest" description="Disordered" evidence="3">
    <location>
        <begin position="1760"/>
        <end position="1865"/>
    </location>
</feature>
<feature type="region of interest" description="Disordered" evidence="3">
    <location>
        <begin position="1966"/>
        <end position="1987"/>
    </location>
</feature>
<feature type="short sequence motif" description="Nuclear localization signal">
    <location>
        <begin position="1282"/>
        <end position="1295"/>
    </location>
</feature>
<feature type="short sequence motif" description="Nuclear localization signal">
    <location>
        <begin position="1604"/>
        <end position="1628"/>
    </location>
</feature>
<feature type="short sequence motif" description="Nuclear localization signal">
    <location>
        <begin position="1812"/>
        <end position="1819"/>
    </location>
</feature>
<feature type="compositionally biased region" description="Polar residues" evidence="3">
    <location>
        <begin position="1"/>
        <end position="22"/>
    </location>
</feature>
<feature type="compositionally biased region" description="Low complexity" evidence="3">
    <location>
        <begin position="51"/>
        <end position="74"/>
    </location>
</feature>
<feature type="compositionally biased region" description="Polar residues" evidence="3">
    <location>
        <begin position="121"/>
        <end position="142"/>
    </location>
</feature>
<feature type="compositionally biased region" description="Low complexity" evidence="3">
    <location>
        <begin position="163"/>
        <end position="205"/>
    </location>
</feature>
<feature type="compositionally biased region" description="Polar residues" evidence="3">
    <location>
        <begin position="206"/>
        <end position="235"/>
    </location>
</feature>
<feature type="compositionally biased region" description="Low complexity" evidence="3">
    <location>
        <begin position="248"/>
        <end position="277"/>
    </location>
</feature>
<feature type="compositionally biased region" description="Polar residues" evidence="3">
    <location>
        <begin position="289"/>
        <end position="311"/>
    </location>
</feature>
<feature type="compositionally biased region" description="Low complexity" evidence="3">
    <location>
        <begin position="322"/>
        <end position="354"/>
    </location>
</feature>
<feature type="compositionally biased region" description="Polar residues" evidence="3">
    <location>
        <begin position="357"/>
        <end position="377"/>
    </location>
</feature>
<feature type="compositionally biased region" description="Low complexity" evidence="3">
    <location>
        <begin position="396"/>
        <end position="416"/>
    </location>
</feature>
<feature type="compositionally biased region" description="Polar residues" evidence="3">
    <location>
        <begin position="417"/>
        <end position="432"/>
    </location>
</feature>
<feature type="compositionally biased region" description="Low complexity" evidence="3">
    <location>
        <begin position="446"/>
        <end position="456"/>
    </location>
</feature>
<feature type="compositionally biased region" description="Polar residues" evidence="3">
    <location>
        <begin position="526"/>
        <end position="537"/>
    </location>
</feature>
<feature type="compositionally biased region" description="Polar residues" evidence="3">
    <location>
        <begin position="566"/>
        <end position="576"/>
    </location>
</feature>
<feature type="compositionally biased region" description="Polar residues" evidence="3">
    <location>
        <begin position="585"/>
        <end position="605"/>
    </location>
</feature>
<feature type="compositionally biased region" description="Polar residues" evidence="3">
    <location>
        <begin position="618"/>
        <end position="627"/>
    </location>
</feature>
<feature type="compositionally biased region" description="Basic and acidic residues" evidence="3">
    <location>
        <begin position="645"/>
        <end position="657"/>
    </location>
</feature>
<feature type="compositionally biased region" description="Polar residues" evidence="3">
    <location>
        <begin position="666"/>
        <end position="682"/>
    </location>
</feature>
<feature type="compositionally biased region" description="Low complexity" evidence="3">
    <location>
        <begin position="693"/>
        <end position="715"/>
    </location>
</feature>
<feature type="compositionally biased region" description="Polar residues" evidence="3">
    <location>
        <begin position="722"/>
        <end position="731"/>
    </location>
</feature>
<feature type="compositionally biased region" description="Basic and acidic residues" evidence="3">
    <location>
        <begin position="761"/>
        <end position="777"/>
    </location>
</feature>
<feature type="compositionally biased region" description="Basic and acidic residues" evidence="3">
    <location>
        <begin position="974"/>
        <end position="989"/>
    </location>
</feature>
<feature type="compositionally biased region" description="Basic and acidic residues" evidence="3">
    <location>
        <begin position="1158"/>
        <end position="1170"/>
    </location>
</feature>
<feature type="compositionally biased region" description="Basic and acidic residues" evidence="3">
    <location>
        <begin position="1305"/>
        <end position="1321"/>
    </location>
</feature>
<feature type="compositionally biased region" description="Basic and acidic residues" evidence="3">
    <location>
        <begin position="1332"/>
        <end position="1346"/>
    </location>
</feature>
<feature type="compositionally biased region" description="Basic and acidic residues" evidence="3">
    <location>
        <begin position="1463"/>
        <end position="1479"/>
    </location>
</feature>
<feature type="compositionally biased region" description="Polar residues" evidence="3">
    <location>
        <begin position="1481"/>
        <end position="1501"/>
    </location>
</feature>
<feature type="compositionally biased region" description="Pro residues" evidence="3">
    <location>
        <begin position="1584"/>
        <end position="1594"/>
    </location>
</feature>
<feature type="compositionally biased region" description="Basic residues" evidence="3">
    <location>
        <begin position="1606"/>
        <end position="1627"/>
    </location>
</feature>
<feature type="compositionally biased region" description="Polar residues" evidence="3">
    <location>
        <begin position="1850"/>
        <end position="1859"/>
    </location>
</feature>
<feature type="compositionally biased region" description="Polar residues" evidence="3">
    <location>
        <begin position="1971"/>
        <end position="1987"/>
    </location>
</feature>
<feature type="modified residue" description="Omega-N-methylarginine" evidence="1">
    <location>
        <position position="59"/>
    </location>
</feature>
<feature type="modified residue" description="Phosphoserine" evidence="1">
    <location>
        <position position="447"/>
    </location>
</feature>
<feature type="modified residue" description="Phosphoserine" evidence="1">
    <location>
        <position position="458"/>
    </location>
</feature>
<feature type="modified residue" description="Phosphoserine" evidence="1">
    <location>
        <position position="567"/>
    </location>
</feature>
<feature type="modified residue" description="Phosphoserine" evidence="1">
    <location>
        <position position="588"/>
    </location>
</feature>
<feature type="modified residue" description="Phosphoserine" evidence="1">
    <location>
        <position position="603"/>
    </location>
</feature>
<feature type="modified residue" description="Phosphoserine" evidence="11 12">
    <location>
        <position position="612"/>
    </location>
</feature>
<feature type="modified residue" description="N6-acetyllysine" evidence="13">
    <location>
        <position position="631"/>
    </location>
</feature>
<feature type="modified residue" description="Phosphoserine" evidence="1">
    <location>
        <position position="669"/>
    </location>
</feature>
<feature type="modified residue" description="Phosphoserine" evidence="1">
    <location>
        <position position="900"/>
    </location>
</feature>
<feature type="modified residue" description="Phosphoserine" evidence="1">
    <location>
        <position position="994"/>
    </location>
</feature>
<feature type="modified residue" description="Phosphoserine" evidence="1">
    <location>
        <position position="1033"/>
    </location>
</feature>
<feature type="modified residue" description="Omega-N-methylarginine" evidence="1">
    <location>
        <position position="1052"/>
    </location>
</feature>
<feature type="modified residue" description="Phosphoserine" evidence="1">
    <location>
        <position position="1081"/>
    </location>
</feature>
<feature type="modified residue" description="Phosphoserine" evidence="1">
    <location>
        <position position="1333"/>
    </location>
</feature>
<feature type="modified residue" description="Phosphoserine" evidence="1">
    <location>
        <position position="1363"/>
    </location>
</feature>
<feature type="modified residue" description="Phosphoserine" evidence="1">
    <location>
        <position position="1389"/>
    </location>
</feature>
<feature type="modified residue" description="Phosphoserine" evidence="1">
    <location>
        <position position="1550"/>
    </location>
</feature>
<feature type="modified residue" description="Phosphoserine" evidence="1">
    <location>
        <position position="1697"/>
    </location>
</feature>
<feature type="modified residue" description="Phosphothreonine" evidence="1">
    <location>
        <position position="1699"/>
    </location>
</feature>
<feature type="modified residue" description="Phosphothreonine" evidence="12">
    <location>
        <position position="1790"/>
    </location>
</feature>
<feature type="modified residue" description="Phosphothreonine" evidence="12">
    <location>
        <position position="1792"/>
    </location>
</feature>
<feature type="cross-link" description="Glycyl lysine isopeptide (Lys-Gly) (interchain with G-Cter in SUMO2)" evidence="1">
    <location>
        <position position="316"/>
    </location>
</feature>
<feature type="cross-link" description="Glycyl lysine isopeptide (Lys-Gly) (interchain with G-Cter in SUMO2)" evidence="1">
    <location>
        <position position="739"/>
    </location>
</feature>
<feature type="cross-link" description="Glycyl lysine isopeptide (Lys-Gly) (interchain with G-Cter in SUMO2)" evidence="1">
    <location>
        <position position="762"/>
    </location>
</feature>
<feature type="cross-link" description="Glycyl lysine isopeptide (Lys-Gly) (interchain with G-Cter in SUMO2)" evidence="1">
    <location>
        <position position="777"/>
    </location>
</feature>
<feature type="cross-link" description="Glycyl lysine isopeptide (Lys-Gly) (interchain with G-Cter in SUMO2)" evidence="1">
    <location>
        <position position="852"/>
    </location>
</feature>
<feature type="cross-link" description="Glycyl lysine isopeptide (Lys-Gly) (interchain with G-Cter in SUMO2)" evidence="1">
    <location>
        <position position="861"/>
    </location>
</feature>
<feature type="cross-link" description="Glycyl lysine isopeptide (Lys-Gly) (interchain with G-Cter in SUMO2)" evidence="1">
    <location>
        <position position="873"/>
    </location>
</feature>
<feature type="cross-link" description="Glycyl lysine isopeptide (Lys-Gly) (interchain with G-Cter in SUMO2)" evidence="1">
    <location>
        <position position="949"/>
    </location>
</feature>
<feature type="cross-link" description="Glycyl lysine isopeptide (Lys-Gly) (interchain with G-Cter in SUMO2)" evidence="1">
    <location>
        <position position="951"/>
    </location>
</feature>
<feature type="cross-link" description="Glycyl lysine isopeptide (Lys-Gly) (interchain with G-Cter in SUMO1); alternate" evidence="1">
    <location>
        <position position="958"/>
    </location>
</feature>
<feature type="cross-link" description="Glycyl lysine isopeptide (Lys-Gly) (interchain with G-Cter in SUMO2); alternate" evidence="1">
    <location>
        <position position="958"/>
    </location>
</feature>
<feature type="cross-link" description="Glycyl lysine isopeptide (Lys-Gly) (interchain with G-Cter in SUMO2)" evidence="1">
    <location>
        <position position="985"/>
    </location>
</feature>
<feature type="cross-link" description="Glycyl lysine isopeptide (Lys-Gly) (interchain with G-Cter in SUMO2)" evidence="1">
    <location>
        <position position="1043"/>
    </location>
</feature>
<feature type="cross-link" description="Glycyl lysine isopeptide (Lys-Gly) (interchain with G-Cter in SUMO2)" evidence="1">
    <location>
        <position position="1114"/>
    </location>
</feature>
<feature type="cross-link" description="Glycyl lysine isopeptide (Lys-Gly) (interchain with G-Cter in SUMO2)" evidence="1">
    <location>
        <position position="1126"/>
    </location>
</feature>
<feature type="cross-link" description="Glycyl lysine isopeptide (Lys-Gly) (interchain with G-Cter in SUMO2)" evidence="1">
    <location>
        <position position="1165"/>
    </location>
</feature>
<feature type="cross-link" description="Glycyl lysine isopeptide (Lys-Gly) (interchain with G-Cter in SUMO2)" evidence="1">
    <location>
        <position position="1201"/>
    </location>
</feature>
<feature type="cross-link" description="Glycyl lysine isopeptide (Lys-Gly) (interchain with G-Cter in SUMO2)" evidence="1">
    <location>
        <position position="1206"/>
    </location>
</feature>
<feature type="cross-link" description="Glycyl lysine isopeptide (Lys-Gly) (interchain with G-Cter in SUMO2)" evidence="1">
    <location>
        <position position="1211"/>
    </location>
</feature>
<feature type="cross-link" description="Glycyl lysine isopeptide (Lys-Gly) (interchain with G-Cter in SUMO2)" evidence="1">
    <location>
        <position position="1238"/>
    </location>
</feature>
<feature type="cross-link" description="Glycyl lysine isopeptide (Lys-Gly) (interchain with G-Cter in SUMO2)" evidence="1">
    <location>
        <position position="1259"/>
    </location>
</feature>
<feature type="cross-link" description="Glycyl lysine isopeptide (Lys-Gly) (interchain with G-Cter in SUMO2)" evidence="1">
    <location>
        <position position="1295"/>
    </location>
</feature>
<feature type="cross-link" description="Glycyl lysine isopeptide (Lys-Gly) (interchain with G-Cter in SUMO2)" evidence="1">
    <location>
        <position position="1302"/>
    </location>
</feature>
<feature type="cross-link" description="Glycyl lysine isopeptide (Lys-Gly) (interchain with G-Cter in SUMO2)" evidence="1">
    <location>
        <position position="1337"/>
    </location>
</feature>
<feature type="cross-link" description="Glycyl lysine isopeptide (Lys-Gly) (interchain with G-Cter in SUMO2)" evidence="1">
    <location>
        <position position="1366"/>
    </location>
</feature>
<feature type="cross-link" description="Glycyl lysine isopeptide (Lys-Gly) (interchain with G-Cter in SUMO2)" evidence="1">
    <location>
        <position position="1417"/>
    </location>
</feature>
<feature type="cross-link" description="Glycyl lysine isopeptide (Lys-Gly) (interchain with G-Cter in SUMO2)" evidence="1">
    <location>
        <position position="1437"/>
    </location>
</feature>
<feature type="cross-link" description="Glycyl lysine isopeptide (Lys-Gly) (interchain with G-Cter in SUMO2)" evidence="1">
    <location>
        <position position="1456"/>
    </location>
</feature>
<feature type="cross-link" description="Glycyl lysine isopeptide (Lys-Gly) (interchain with G-Cter in SUMO2)" evidence="1">
    <location>
        <position position="1474"/>
    </location>
</feature>
<feature type="cross-link" description="Glycyl lysine isopeptide (Lys-Gly) (interchain with G-Cter in SUMO2)" evidence="1">
    <location>
        <position position="1538"/>
    </location>
</feature>
<feature type="cross-link" description="Glycyl lysine isopeptide (Lys-Gly) (interchain with G-Cter in SUMO2)" evidence="1">
    <location>
        <position position="1552"/>
    </location>
</feature>
<feature type="cross-link" description="Glycyl lysine isopeptide (Lys-Gly) (interchain with G-Cter in SUMO2)" evidence="1">
    <location>
        <position position="1641"/>
    </location>
</feature>
<feature type="splice variant" id="VSP_003986" description="In isoform 2." evidence="7 8">
    <original>PPLPCPLPPLQNKTAKGSLSTEQSERG</original>
    <variation>VRLWR</variation>
    <location>
        <begin position="1961"/>
        <end position="1987"/>
    </location>
</feature>
<feature type="mutagenesis site" description="Loss of interaction with RNF4; when associated with S-1702; R-1736 and V-1737." evidence="4">
    <original>A</original>
    <variation>T</variation>
    <location>
        <position position="1629"/>
    </location>
</feature>
<feature type="mutagenesis site" description="Loss of interaction with RNF4; when associated with T-1629; R-1736 and V-1737." evidence="4">
    <original>P</original>
    <variation>S</variation>
    <location>
        <position position="1702"/>
    </location>
</feature>
<feature type="mutagenesis site" description="Loss of interaction with RNF4; when associated with T-1629 and S-1702." evidence="4">
    <original>CG</original>
    <variation>RV</variation>
    <location>
        <begin position="1736"/>
        <end position="1737"/>
    </location>
</feature>
<feature type="mutagenesis site" description="Reduces the inhibitory effect of the atypical PHD domain." evidence="4">
    <original>C</original>
    <variation>A</variation>
    <location>
        <position position="1926"/>
    </location>
</feature>
<feature type="mutagenesis site" description="Reduces the inhibitory effect of the atypical PHD domain." evidence="4">
    <original>C</original>
    <variation>A</variation>
    <location>
        <position position="1931"/>
    </location>
</feature>
<feature type="mutagenesis site" description="Reduces the inhibitory effect of the atypical PHD domain." evidence="4">
    <original>H</original>
    <variation>L</variation>
    <location>
        <position position="1936"/>
    </location>
</feature>
<feature type="mutagenesis site" description="Reduces the inhibitory effect of the atypical PHD domain." evidence="4">
    <original>C</original>
    <variation>A</variation>
    <location>
        <position position="1939"/>
    </location>
</feature>
<feature type="sequence conflict" description="In Ref. 1; AAG28929." evidence="9" ref="1">
    <original>H</original>
    <variation>R</variation>
    <location>
        <position position="355"/>
    </location>
</feature>
<feature type="sequence conflict" description="In Ref. 1; AAG28929." evidence="9" ref="1">
    <original>M</original>
    <variation>I</variation>
    <location>
        <position position="366"/>
    </location>
</feature>
<feature type="sequence conflict" description="In Ref. 1; AAG28929." evidence="9" ref="1">
    <original>M</original>
    <variation>L</variation>
    <location>
        <position position="443"/>
    </location>
</feature>
<feature type="sequence conflict" description="In Ref. 1; AAG28929." evidence="9" ref="1">
    <original>S</original>
    <variation>G</variation>
    <location>
        <position position="954"/>
    </location>
</feature>
<feature type="sequence conflict" description="In Ref. 4; AAA86495." evidence="9" ref="4">
    <original>R</original>
    <variation>I</variation>
    <location>
        <position position="1022"/>
    </location>
</feature>
<feature type="sequence conflict" description="In Ref. 4; AAA86495." evidence="9" ref="4">
    <original>P</original>
    <variation>R</variation>
    <location>
        <position position="1082"/>
    </location>
</feature>
<feature type="sequence conflict" description="In Ref. 4; AAA86495." evidence="9" ref="4">
    <original>R</original>
    <variation>G</variation>
    <location>
        <position position="1161"/>
    </location>
</feature>
<feature type="sequence conflict" description="In Ref. 1; AAG28929." evidence="9" ref="1">
    <original>K</original>
    <variation>Q</variation>
    <location>
        <position position="1201"/>
    </location>
</feature>
<feature type="sequence conflict" description="In Ref. 1; AAG28929." evidence="9" ref="1">
    <original>C</original>
    <variation>R</variation>
    <location>
        <position position="1216"/>
    </location>
</feature>
<feature type="sequence conflict" description="In Ref. 4; AAA86495." evidence="9" ref="4">
    <original>Q</original>
    <variation>R</variation>
    <location>
        <position position="1297"/>
    </location>
</feature>
<feature type="sequence conflict" description="In Ref. 4; AAA86495." evidence="9" ref="4">
    <original>S</original>
    <variation>G</variation>
    <location>
        <position position="1418"/>
    </location>
</feature>
<sequence length="1987" mass="215683">MQSFREQSSYHGNQQSYPQEVHSSSRIEEFSPRQAQMFQNFGGAGGGSSGTGSSSSGRRGTAAAAAAMASETSGHQGYQGFRKEAGDFYYMAGNKDTVAAGTPQPPQRRPSGPVQSYGPPQGSSFGNQYASEGHVSQFQAQHSALGGVSHYQQDYTGPFSPGSAQYQQQASSQQQQQQQQQQQQQQQQQQQQVQQLRQQLYQSHQPLPQTTGQPASGSSHLQPMQRPSTLPSSAGYQLRVGQFGQHYQSSASSSSSSSFPSPQRFSQSGQSYDGSYSVNAGSQYEGHNVGSNAQAYGTQSNYSYQPQSMKNFEQAKIPPGNQQGQQQQQQQPQPQQQQPQQQQQQQQQQQHPPQHVMQYTNAATKMPLQSQVGQYNQPEVPVRSPMQFHQNFSPISNPSPAASVVQSPSCSSTPSPLMQSGENLQCGQGNVPMSSRNRILQLMPQLSPTPSMMPSPNSHAAGFKGFGLEGVPEKRLTDPGLSSLSALSSQVANLPNTVQHMLLSDALTPQKKTSKRPSSSSKKADSCTNSEGSSQPEEQLKSPMAESLDGGCSSSSEDQGERVRQLSGQSTSSDTTYKCGASEKAGSSPTQGAQNEAPRLSTSPATRDEAASPGAKDTSLSSEGNTKVNEKTVGVIVSREAMTGRVEKSGGQDKGSQEDDPAASQRPPSNSGVKEISHTSLPQPDPPGGGSKGNKNGDNNSSNHNGEGNGPSSHSAVGPSFTGRTEPSKSPGSLRYSYKESFGSAVPRNVSGYPQYPSGQEKGDFGSHGERKGRNEKFPSLLQEVLQGYHHHPDRRYPRSAQEHQGMASGLEGTARPNILVSQTNELASRGLLNKSIGSLLENPHWGPWERKSSSTAPEMKQINLSDYPIPRKFEIEPPSSAHEPGGSLSERRSVICDISPLRQIVRDPGAHSLGHMGTDARIGRNERLNPSLSQSVILPGGLVSMETKLKSQSGQIKEEDFEQSKSQASFNKKSGDHCHPTSIKHETYRGNASPGAAAHDSISDYGPQDSRSTPMRRVPGRVGSRETMRGRSSSQYHDFAEKLKMSPGRSRGPGGDPHHMNPHMTFSERANRSSLHAPFSPNSESLASAYHTNTRAHAYGDPNTGLNSQLHYKRQMYQQQQEEYKDWASSSAQGVIAAAQHRQEGPRKSPRQQQFLDRVRSPLKNDKDGMMYGPPVGTYHDPSTQEAGRCLMSSDGLPAKSMELKHSSQKLQESCWDLSRQTSPAKSSGPPGMSNQKRYGPPHEPDGHGLAESAQSSKPSNVMLRLPGQEDHSSQNPLIMRRRVRSFISPIPSKRQSQDVKNSNADDKGRLLHPSKEGADKAYNSYSHLSHSQDIKSIPKRDSSKDLPNPDNRNCPAVTLTSPAKTKILPPRKGRGLKLEAIVQKITSPNIRRSASANSAEAGGDTVTLDDILSLKSGPPEGGTVATQEAEMEKRKCEVVSDLVSVTNQESNVEKPLPGPSEEWRGSGDDKVKTEAHVETASTGKEPSGTMTSTASQKPGGNQGRPDGSLGGAAPLIFPDSKNVAPVGILAPEANPKAEEKENDTVMISPKQESFPPKGYFPSGKKKGRPIGSVNKQKKQQQQPPPPPQPPQMPEGSADGEPKPKKQRQRRERRKPGAQPRKRKTKQAVPIVEPQEPEIKLKYATQPLDKTDAKNKSFFPYIHVVNKCELGAVCTIINAEEEEQTKLVRSRKGQRSLTPPPSSTESKVLPASSFMLQGPVVTESSVMGHLVCCLCGKWASYRNMGDLFGPFYPQDYAATLPKNPPPKRSSEMQSKVKVRHKSASNGSKTDTEEEEEQQQQKEQRSLAAHPRFKRRHRSEDCGGGPRSLSRGLPCKKAATEGSSEKTVSDTKPSVPTTSEGGPELELQIPELPLDSNEFWVHEGCILWANGIYLVCGRLYGLQEALEIAREMKCSHCQEAGATLGCYNKGCSFRYHYPCAIDADCLLHEENFSVRCPKHKPPLPCPLPPLQNKTAKGSLSTEQSERG</sequence>
<accession>Q9EPQ8</accession>
<accession>B9EHJ7</accession>
<accession>Q60792</accession>
<gene>
    <name type="primary">Tcf20</name>
    <name type="synonym">Spbp</name>
</gene>
<proteinExistence type="evidence at protein level"/>
<organism>
    <name type="scientific">Mus musculus</name>
    <name type="common">Mouse</name>
    <dbReference type="NCBI Taxonomy" id="10090"/>
    <lineage>
        <taxon>Eukaryota</taxon>
        <taxon>Metazoa</taxon>
        <taxon>Chordata</taxon>
        <taxon>Craniata</taxon>
        <taxon>Vertebrata</taxon>
        <taxon>Euteleostomi</taxon>
        <taxon>Mammalia</taxon>
        <taxon>Eutheria</taxon>
        <taxon>Euarchontoglires</taxon>
        <taxon>Glires</taxon>
        <taxon>Rodentia</taxon>
        <taxon>Myomorpha</taxon>
        <taxon>Muroidea</taxon>
        <taxon>Muridae</taxon>
        <taxon>Murinae</taxon>
        <taxon>Mus</taxon>
        <taxon>Mus</taxon>
    </lineage>
</organism>
<name>TCF20_MOUSE</name>
<comment type="function">
    <text evidence="5">Transcriptional activator that binds to the regulatory region of MMP3 and thereby controls stromelysin expression. It stimulates the activity of various transcriptional activators such as JUN, SP1, PAX6 and ETS1, suggesting a function as a coactivator.</text>
</comment>
<comment type="subunit">
    <text evidence="4 6 9">Homodimer (Probable). Interacts with RNF4 and JUN. Binds to the regulatory region of MMP3.</text>
</comment>
<comment type="subcellular location">
    <subcellularLocation>
        <location evidence="10">Nucleus</location>
    </subcellularLocation>
</comment>
<comment type="alternative products">
    <event type="alternative splicing"/>
    <isoform>
        <id>Q9EPQ8-1</id>
        <name>1</name>
        <sequence type="displayed"/>
    </isoform>
    <isoform>
        <id>Q9EPQ8-2</id>
        <name>2</name>
        <sequence type="described" ref="VSP_003986"/>
    </isoform>
</comment>
<comment type="tissue specificity">
    <text evidence="4">Expressed in brain, lung, liver, kidney and testes.</text>
</comment>
<comment type="developmental stage">
    <text>Isoform 2 is exclusively expressed at 7-11 days of development. Isoform 1 is found only at low levels in 15-17 days embryos.</text>
</comment>
<comment type="domain">
    <text>The atypical PHD domain functions as a negative modulator of cofactor binding.</text>
</comment>
<comment type="sequence caution" evidence="9">
    <conflict type="frameshift">
        <sequence resource="EMBL-CDS" id="AAA86495"/>
    </conflict>
</comment>
<dbReference type="EMBL" id="AY007594">
    <property type="protein sequence ID" value="AAG28929.1"/>
    <property type="molecule type" value="mRNA"/>
</dbReference>
<dbReference type="EMBL" id="AC087902">
    <property type="status" value="NOT_ANNOTATED_CDS"/>
    <property type="molecule type" value="Genomic_DNA"/>
</dbReference>
<dbReference type="EMBL" id="AC129563">
    <property type="status" value="NOT_ANNOTATED_CDS"/>
    <property type="molecule type" value="Genomic_DNA"/>
</dbReference>
<dbReference type="EMBL" id="BC138038">
    <property type="protein sequence ID" value="AAI38039.1"/>
    <property type="molecule type" value="mRNA"/>
</dbReference>
<dbReference type="EMBL" id="U20284">
    <property type="protein sequence ID" value="AAA86495.1"/>
    <property type="status" value="ALT_FRAME"/>
    <property type="molecule type" value="mRNA"/>
</dbReference>
<dbReference type="CCDS" id="CCDS27693.1">
    <molecule id="Q9EPQ8-2"/>
</dbReference>
<dbReference type="CCDS" id="CCDS49681.1">
    <molecule id="Q9EPQ8-1"/>
</dbReference>
<dbReference type="RefSeq" id="NP_001107612.1">
    <molecule id="Q9EPQ8-1"/>
    <property type="nucleotide sequence ID" value="NM_001114140.1"/>
</dbReference>
<dbReference type="RefSeq" id="NP_001389767.1">
    <molecule id="Q9EPQ8-1"/>
    <property type="nucleotide sequence ID" value="NM_001402838.1"/>
</dbReference>
<dbReference type="RefSeq" id="XP_006520795.1">
    <molecule id="Q9EPQ8-1"/>
    <property type="nucleotide sequence ID" value="XM_006520732.3"/>
</dbReference>
<dbReference type="RefSeq" id="XP_006520796.1">
    <molecule id="Q9EPQ8-1"/>
    <property type="nucleotide sequence ID" value="XM_006520733.2"/>
</dbReference>
<dbReference type="RefSeq" id="XP_011243853.1">
    <property type="nucleotide sequence ID" value="XM_011245551.2"/>
</dbReference>
<dbReference type="RefSeq" id="XP_011243855.1">
    <molecule id="Q9EPQ8-2"/>
    <property type="nucleotide sequence ID" value="XM_011245553.4"/>
</dbReference>
<dbReference type="SMR" id="Q9EPQ8"/>
<dbReference type="BioGRID" id="204004">
    <property type="interactions" value="12"/>
</dbReference>
<dbReference type="FunCoup" id="Q9EPQ8">
    <property type="interactions" value="2035"/>
</dbReference>
<dbReference type="IntAct" id="Q9EPQ8">
    <property type="interactions" value="2"/>
</dbReference>
<dbReference type="MINT" id="Q9EPQ8"/>
<dbReference type="STRING" id="10090.ENSMUSP00000105136"/>
<dbReference type="GlyGen" id="Q9EPQ8">
    <property type="glycosylation" value="9 sites, 2 N-linked glycans (2 sites), 1 O-linked glycan (4 sites)"/>
</dbReference>
<dbReference type="iPTMnet" id="Q9EPQ8"/>
<dbReference type="PhosphoSitePlus" id="Q9EPQ8"/>
<dbReference type="jPOST" id="Q9EPQ8"/>
<dbReference type="PaxDb" id="10090-ENSMUSP00000105136"/>
<dbReference type="PeptideAtlas" id="Q9EPQ8"/>
<dbReference type="ProteomicsDB" id="263146">
    <molecule id="Q9EPQ8-1"/>
</dbReference>
<dbReference type="ProteomicsDB" id="263147">
    <molecule id="Q9EPQ8-2"/>
</dbReference>
<dbReference type="Pumba" id="Q9EPQ8"/>
<dbReference type="DNASU" id="21411"/>
<dbReference type="Ensembl" id="ENSMUST00000048966.7">
    <molecule id="Q9EPQ8-2"/>
    <property type="protein sequence ID" value="ENSMUSP00000048486.6"/>
    <property type="gene ID" value="ENSMUSG00000041852.16"/>
</dbReference>
<dbReference type="Ensembl" id="ENSMUST00000109510.10">
    <molecule id="Q9EPQ8-1"/>
    <property type="protein sequence ID" value="ENSMUSP00000105136.3"/>
    <property type="gene ID" value="ENSMUSG00000041852.16"/>
</dbReference>
<dbReference type="GeneID" id="21411"/>
<dbReference type="KEGG" id="mmu:21411"/>
<dbReference type="UCSC" id="uc007wzo.3">
    <molecule id="Q9EPQ8-1"/>
    <property type="organism name" value="mouse"/>
</dbReference>
<dbReference type="UCSC" id="uc007wzp.3">
    <molecule id="Q9EPQ8-2"/>
    <property type="organism name" value="mouse"/>
</dbReference>
<dbReference type="AGR" id="MGI:108399"/>
<dbReference type="CTD" id="6942"/>
<dbReference type="MGI" id="MGI:108399">
    <property type="gene designation" value="Tcf20"/>
</dbReference>
<dbReference type="VEuPathDB" id="HostDB:ENSMUSG00000041852"/>
<dbReference type="eggNOG" id="KOG1084">
    <property type="taxonomic scope" value="Eukaryota"/>
</dbReference>
<dbReference type="GeneTree" id="ENSGT00940000157896"/>
<dbReference type="HOGENOM" id="CLU_234705_0_0_1"/>
<dbReference type="InParanoid" id="Q9EPQ8"/>
<dbReference type="OMA" id="GHMLNRQ"/>
<dbReference type="OrthoDB" id="10029243at2759"/>
<dbReference type="PhylomeDB" id="Q9EPQ8"/>
<dbReference type="TreeFam" id="TF331317"/>
<dbReference type="BioGRID-ORCS" id="21411">
    <property type="hits" value="2 hits in 80 CRISPR screens"/>
</dbReference>
<dbReference type="ChiTaRS" id="Tcf20">
    <property type="organism name" value="mouse"/>
</dbReference>
<dbReference type="PRO" id="PR:Q9EPQ8"/>
<dbReference type="Proteomes" id="UP000000589">
    <property type="component" value="Chromosome 15"/>
</dbReference>
<dbReference type="RNAct" id="Q9EPQ8">
    <property type="molecule type" value="protein"/>
</dbReference>
<dbReference type="Bgee" id="ENSMUSG00000041852">
    <property type="expression patterns" value="Expressed in rostral migratory stream and 245 other cell types or tissues"/>
</dbReference>
<dbReference type="ExpressionAtlas" id="Q9EPQ8">
    <property type="expression patterns" value="baseline and differential"/>
</dbReference>
<dbReference type="GO" id="GO:0005634">
    <property type="term" value="C:nucleus"/>
    <property type="evidence" value="ECO:0000314"/>
    <property type="project" value="MGI"/>
</dbReference>
<dbReference type="GO" id="GO:0003700">
    <property type="term" value="F:DNA-binding transcription factor activity"/>
    <property type="evidence" value="ECO:0000314"/>
    <property type="project" value="MGI"/>
</dbReference>
<dbReference type="GO" id="GO:0000976">
    <property type="term" value="F:transcription cis-regulatory region binding"/>
    <property type="evidence" value="ECO:0000314"/>
    <property type="project" value="MGI"/>
</dbReference>
<dbReference type="GO" id="GO:0003713">
    <property type="term" value="F:transcription coactivator activity"/>
    <property type="evidence" value="ECO:0000314"/>
    <property type="project" value="ARUK-UCL"/>
</dbReference>
<dbReference type="GO" id="GO:0008270">
    <property type="term" value="F:zinc ion binding"/>
    <property type="evidence" value="ECO:0007669"/>
    <property type="project" value="UniProtKB-KW"/>
</dbReference>
<dbReference type="GO" id="GO:0045944">
    <property type="term" value="P:positive regulation of transcription by RNA polymerase II"/>
    <property type="evidence" value="ECO:0000314"/>
    <property type="project" value="NTNU_SB"/>
</dbReference>
<dbReference type="CDD" id="cd15699">
    <property type="entry name" value="ePHD_TCF20"/>
    <property type="match status" value="1"/>
</dbReference>
<dbReference type="FunFam" id="3.30.40.10:FF:000116">
    <property type="entry name" value="Transcription factor 20 (AR1)"/>
    <property type="match status" value="1"/>
</dbReference>
<dbReference type="Gene3D" id="3.30.40.10">
    <property type="entry name" value="Zinc/RING finger domain, C3HC4 (zinc finger)"/>
    <property type="match status" value="1"/>
</dbReference>
<dbReference type="InterPro" id="IPR034732">
    <property type="entry name" value="EPHD"/>
</dbReference>
<dbReference type="InterPro" id="IPR041972">
    <property type="entry name" value="TCF-20_ePHD"/>
</dbReference>
<dbReference type="InterPro" id="IPR052440">
    <property type="entry name" value="Trans_Reg/Chrom_Remod"/>
</dbReference>
<dbReference type="InterPro" id="IPR001965">
    <property type="entry name" value="Znf_PHD"/>
</dbReference>
<dbReference type="InterPro" id="IPR013083">
    <property type="entry name" value="Znf_RING/FYVE/PHD"/>
</dbReference>
<dbReference type="PANTHER" id="PTHR14955">
    <property type="entry name" value="RETINOIC ACID INDUCED 1/TRANSCRIPTION FACTOR 20"/>
    <property type="match status" value="1"/>
</dbReference>
<dbReference type="PANTHER" id="PTHR14955:SF7">
    <property type="entry name" value="TRANSCRIPTION FACTOR 20"/>
    <property type="match status" value="1"/>
</dbReference>
<dbReference type="Pfam" id="PF13771">
    <property type="entry name" value="zf-HC5HC2H"/>
    <property type="match status" value="1"/>
</dbReference>
<dbReference type="SMART" id="SM00249">
    <property type="entry name" value="PHD"/>
    <property type="match status" value="1"/>
</dbReference>
<dbReference type="PROSITE" id="PS51805">
    <property type="entry name" value="EPHD"/>
    <property type="match status" value="1"/>
</dbReference>
<evidence type="ECO:0000250" key="1">
    <source>
        <dbReference type="UniProtKB" id="Q9UGU0"/>
    </source>
</evidence>
<evidence type="ECO:0000255" key="2">
    <source>
        <dbReference type="PROSITE-ProRule" id="PRU01146"/>
    </source>
</evidence>
<evidence type="ECO:0000256" key="3">
    <source>
        <dbReference type="SAM" id="MobiDB-lite"/>
    </source>
</evidence>
<evidence type="ECO:0000269" key="4">
    <source>
    </source>
</evidence>
<evidence type="ECO:0000269" key="5">
    <source>
    </source>
</evidence>
<evidence type="ECO:0000269" key="6">
    <source>
    </source>
</evidence>
<evidence type="ECO:0000303" key="7">
    <source>
    </source>
</evidence>
<evidence type="ECO:0000303" key="8">
    <source>
    </source>
</evidence>
<evidence type="ECO:0000305" key="9"/>
<evidence type="ECO:0000305" key="10">
    <source>
    </source>
</evidence>
<evidence type="ECO:0007744" key="11">
    <source>
    </source>
</evidence>
<evidence type="ECO:0007744" key="12">
    <source>
    </source>
</evidence>
<evidence type="ECO:0007744" key="13">
    <source>
    </source>
</evidence>
<protein>
    <recommendedName>
        <fullName>Transcription factor 20</fullName>
        <shortName>TCF-20</shortName>
    </recommendedName>
    <alternativeName>
        <fullName>Nuclear factor SPBP</fullName>
    </alternativeName>
    <alternativeName>
        <fullName>Stromelysin-1 PDGF-responsive element-binding protein</fullName>
        <shortName>SPRE-binding protein</shortName>
    </alternativeName>
</protein>